<dbReference type="EC" id="4.3.2.10" evidence="1"/>
<dbReference type="EMBL" id="CP000034">
    <property type="protein sequence ID" value="ABB62301.1"/>
    <property type="molecule type" value="Genomic_DNA"/>
</dbReference>
<dbReference type="RefSeq" id="WP_000880181.1">
    <property type="nucleotide sequence ID" value="NC_007606.1"/>
</dbReference>
<dbReference type="RefSeq" id="YP_403792.1">
    <property type="nucleotide sequence ID" value="NC_007606.1"/>
</dbReference>
<dbReference type="SMR" id="Q32EF4"/>
<dbReference type="STRING" id="300267.SDY_2216"/>
<dbReference type="EnsemblBacteria" id="ABB62301">
    <property type="protein sequence ID" value="ABB62301"/>
    <property type="gene ID" value="SDY_2216"/>
</dbReference>
<dbReference type="KEGG" id="sdy:SDY_2216"/>
<dbReference type="PATRIC" id="fig|300267.13.peg.2680"/>
<dbReference type="HOGENOM" id="CLU_048577_4_0_6"/>
<dbReference type="UniPathway" id="UPA00031">
    <property type="reaction ID" value="UER00010"/>
</dbReference>
<dbReference type="Proteomes" id="UP000002716">
    <property type="component" value="Chromosome"/>
</dbReference>
<dbReference type="GO" id="GO:0005737">
    <property type="term" value="C:cytoplasm"/>
    <property type="evidence" value="ECO:0007669"/>
    <property type="project" value="UniProtKB-SubCell"/>
</dbReference>
<dbReference type="GO" id="GO:0000107">
    <property type="term" value="F:imidazoleglycerol-phosphate synthase activity"/>
    <property type="evidence" value="ECO:0007669"/>
    <property type="project" value="UniProtKB-UniRule"/>
</dbReference>
<dbReference type="GO" id="GO:0016829">
    <property type="term" value="F:lyase activity"/>
    <property type="evidence" value="ECO:0007669"/>
    <property type="project" value="UniProtKB-KW"/>
</dbReference>
<dbReference type="GO" id="GO:0000105">
    <property type="term" value="P:L-histidine biosynthetic process"/>
    <property type="evidence" value="ECO:0007669"/>
    <property type="project" value="UniProtKB-UniRule"/>
</dbReference>
<dbReference type="CDD" id="cd04731">
    <property type="entry name" value="HisF"/>
    <property type="match status" value="1"/>
</dbReference>
<dbReference type="FunFam" id="3.20.20.70:FF:000006">
    <property type="entry name" value="Imidazole glycerol phosphate synthase subunit HisF"/>
    <property type="match status" value="1"/>
</dbReference>
<dbReference type="Gene3D" id="3.20.20.70">
    <property type="entry name" value="Aldolase class I"/>
    <property type="match status" value="1"/>
</dbReference>
<dbReference type="HAMAP" id="MF_01013">
    <property type="entry name" value="HisF"/>
    <property type="match status" value="1"/>
</dbReference>
<dbReference type="InterPro" id="IPR013785">
    <property type="entry name" value="Aldolase_TIM"/>
</dbReference>
<dbReference type="InterPro" id="IPR006062">
    <property type="entry name" value="His_biosynth"/>
</dbReference>
<dbReference type="InterPro" id="IPR004651">
    <property type="entry name" value="HisF"/>
</dbReference>
<dbReference type="InterPro" id="IPR050064">
    <property type="entry name" value="IGPS_HisA/HisF"/>
</dbReference>
<dbReference type="InterPro" id="IPR011060">
    <property type="entry name" value="RibuloseP-bd_barrel"/>
</dbReference>
<dbReference type="NCBIfam" id="TIGR00735">
    <property type="entry name" value="hisF"/>
    <property type="match status" value="1"/>
</dbReference>
<dbReference type="PANTHER" id="PTHR21235:SF2">
    <property type="entry name" value="IMIDAZOLE GLYCEROL PHOSPHATE SYNTHASE HISHF"/>
    <property type="match status" value="1"/>
</dbReference>
<dbReference type="PANTHER" id="PTHR21235">
    <property type="entry name" value="IMIDAZOLE GLYCEROL PHOSPHATE SYNTHASE SUBUNIT HISF/H IGP SYNTHASE SUBUNIT HISF/H"/>
    <property type="match status" value="1"/>
</dbReference>
<dbReference type="Pfam" id="PF00977">
    <property type="entry name" value="His_biosynth"/>
    <property type="match status" value="1"/>
</dbReference>
<dbReference type="SUPFAM" id="SSF51366">
    <property type="entry name" value="Ribulose-phoshate binding barrel"/>
    <property type="match status" value="1"/>
</dbReference>
<organism>
    <name type="scientific">Shigella dysenteriae serotype 1 (strain Sd197)</name>
    <dbReference type="NCBI Taxonomy" id="300267"/>
    <lineage>
        <taxon>Bacteria</taxon>
        <taxon>Pseudomonadati</taxon>
        <taxon>Pseudomonadota</taxon>
        <taxon>Gammaproteobacteria</taxon>
        <taxon>Enterobacterales</taxon>
        <taxon>Enterobacteriaceae</taxon>
        <taxon>Shigella</taxon>
    </lineage>
</organism>
<evidence type="ECO:0000255" key="1">
    <source>
        <dbReference type="HAMAP-Rule" id="MF_01013"/>
    </source>
</evidence>
<reference key="1">
    <citation type="journal article" date="2005" name="Nucleic Acids Res.">
        <title>Genome dynamics and diversity of Shigella species, the etiologic agents of bacillary dysentery.</title>
        <authorList>
            <person name="Yang F."/>
            <person name="Yang J."/>
            <person name="Zhang X."/>
            <person name="Chen L."/>
            <person name="Jiang Y."/>
            <person name="Yan Y."/>
            <person name="Tang X."/>
            <person name="Wang J."/>
            <person name="Xiong Z."/>
            <person name="Dong J."/>
            <person name="Xue Y."/>
            <person name="Zhu Y."/>
            <person name="Xu X."/>
            <person name="Sun L."/>
            <person name="Chen S."/>
            <person name="Nie H."/>
            <person name="Peng J."/>
            <person name="Xu J."/>
            <person name="Wang Y."/>
            <person name="Yuan Z."/>
            <person name="Wen Y."/>
            <person name="Yao Z."/>
            <person name="Shen Y."/>
            <person name="Qiang B."/>
            <person name="Hou Y."/>
            <person name="Yu J."/>
            <person name="Jin Q."/>
        </authorList>
    </citation>
    <scope>NUCLEOTIDE SEQUENCE [LARGE SCALE GENOMIC DNA]</scope>
    <source>
        <strain>Sd197</strain>
    </source>
</reference>
<keyword id="KW-0028">Amino-acid biosynthesis</keyword>
<keyword id="KW-0963">Cytoplasm</keyword>
<keyword id="KW-0368">Histidine biosynthesis</keyword>
<keyword id="KW-0456">Lyase</keyword>
<keyword id="KW-1185">Reference proteome</keyword>
<accession>Q32EF4</accession>
<gene>
    <name evidence="1" type="primary">hisF</name>
    <name type="ordered locus">SDY_2216</name>
</gene>
<name>HIS6_SHIDS</name>
<proteinExistence type="inferred from homology"/>
<feature type="chain" id="PRO_0000142228" description="Imidazole glycerol phosphate synthase subunit HisF">
    <location>
        <begin position="1"/>
        <end position="258"/>
    </location>
</feature>
<feature type="active site" evidence="1">
    <location>
        <position position="11"/>
    </location>
</feature>
<feature type="active site" evidence="1">
    <location>
        <position position="130"/>
    </location>
</feature>
<comment type="function">
    <text evidence="1">IGPS catalyzes the conversion of PRFAR and glutamine to IGP, AICAR and glutamate. The HisF subunit catalyzes the cyclization activity that produces IGP and AICAR from PRFAR using the ammonia provided by the HisH subunit.</text>
</comment>
<comment type="catalytic activity">
    <reaction evidence="1">
        <text>5-[(5-phospho-1-deoxy-D-ribulos-1-ylimino)methylamino]-1-(5-phospho-beta-D-ribosyl)imidazole-4-carboxamide + L-glutamine = D-erythro-1-(imidazol-4-yl)glycerol 3-phosphate + 5-amino-1-(5-phospho-beta-D-ribosyl)imidazole-4-carboxamide + L-glutamate + H(+)</text>
        <dbReference type="Rhea" id="RHEA:24793"/>
        <dbReference type="ChEBI" id="CHEBI:15378"/>
        <dbReference type="ChEBI" id="CHEBI:29985"/>
        <dbReference type="ChEBI" id="CHEBI:58278"/>
        <dbReference type="ChEBI" id="CHEBI:58359"/>
        <dbReference type="ChEBI" id="CHEBI:58475"/>
        <dbReference type="ChEBI" id="CHEBI:58525"/>
        <dbReference type="EC" id="4.3.2.10"/>
    </reaction>
</comment>
<comment type="pathway">
    <text evidence="1">Amino-acid biosynthesis; L-histidine biosynthesis; L-histidine from 5-phospho-alpha-D-ribose 1-diphosphate: step 5/9.</text>
</comment>
<comment type="subunit">
    <text evidence="1">Heterodimer of HisH and HisF.</text>
</comment>
<comment type="subcellular location">
    <subcellularLocation>
        <location evidence="1">Cytoplasm</location>
    </subcellularLocation>
</comment>
<comment type="similarity">
    <text evidence="1">Belongs to the HisA/HisF family.</text>
</comment>
<sequence>MLAKRIIPCLDVRDGQVVKGVQFRNHEIIGDIVPLAKRYAEEGADELVFYDITASSDGRVVDKSWVSRVAEVIDIPFCVAGGIKSLEDAAKILSFGADKISINSPALADPTLITRLADRFGVQCIVVGIDTWYDAETGKYHVNQYTGDESRTRVTQWETLDWVQEVQKRGAGEIVLNMMNQDGVRNGYDLEQLKKVREVCHIPLIASGGAGTMEHFLEAFRDADVDGALAASVFHKQIINIGELKAYLATQGVEIRIC</sequence>
<protein>
    <recommendedName>
        <fullName evidence="1">Imidazole glycerol phosphate synthase subunit HisF</fullName>
        <ecNumber evidence="1">4.3.2.10</ecNumber>
    </recommendedName>
    <alternativeName>
        <fullName evidence="1">IGP synthase cyclase subunit</fullName>
    </alternativeName>
    <alternativeName>
        <fullName evidence="1">IGP synthase subunit HisF</fullName>
    </alternativeName>
    <alternativeName>
        <fullName evidence="1">ImGP synthase subunit HisF</fullName>
        <shortName evidence="1">IGPS subunit HisF</shortName>
    </alternativeName>
</protein>